<evidence type="ECO:0000255" key="1">
    <source>
        <dbReference type="HAMAP-Rule" id="MF_00135"/>
    </source>
</evidence>
<feature type="chain" id="PRO_1000018614" description="N-(5'-phosphoribosyl)anthranilate isomerase">
    <location>
        <begin position="1"/>
        <end position="208"/>
    </location>
</feature>
<keyword id="KW-0028">Amino-acid biosynthesis</keyword>
<keyword id="KW-0057">Aromatic amino acid biosynthesis</keyword>
<keyword id="KW-0413">Isomerase</keyword>
<keyword id="KW-0822">Tryptophan biosynthesis</keyword>
<name>TRPF_NEIMF</name>
<gene>
    <name evidence="1" type="primary">trpF</name>
    <name type="ordered locus">NMC0639</name>
</gene>
<accession>A1KSV1</accession>
<dbReference type="EC" id="5.3.1.24" evidence="1"/>
<dbReference type="EMBL" id="AM421808">
    <property type="protein sequence ID" value="CAM09932.1"/>
    <property type="molecule type" value="Genomic_DNA"/>
</dbReference>
<dbReference type="RefSeq" id="WP_002221271.1">
    <property type="nucleotide sequence ID" value="NC_008767.1"/>
</dbReference>
<dbReference type="SMR" id="A1KSV1"/>
<dbReference type="KEGG" id="nmc:NMC0639"/>
<dbReference type="HOGENOM" id="CLU_076364_2_0_4"/>
<dbReference type="UniPathway" id="UPA00035">
    <property type="reaction ID" value="UER00042"/>
</dbReference>
<dbReference type="Proteomes" id="UP000002286">
    <property type="component" value="Chromosome"/>
</dbReference>
<dbReference type="GO" id="GO:0004640">
    <property type="term" value="F:phosphoribosylanthranilate isomerase activity"/>
    <property type="evidence" value="ECO:0007669"/>
    <property type="project" value="UniProtKB-UniRule"/>
</dbReference>
<dbReference type="GO" id="GO:0000162">
    <property type="term" value="P:L-tryptophan biosynthetic process"/>
    <property type="evidence" value="ECO:0007669"/>
    <property type="project" value="UniProtKB-UniRule"/>
</dbReference>
<dbReference type="CDD" id="cd00405">
    <property type="entry name" value="PRAI"/>
    <property type="match status" value="1"/>
</dbReference>
<dbReference type="FunFam" id="3.20.20.70:FF:000075">
    <property type="entry name" value="Tryptophan biosynthesis protein TRP1"/>
    <property type="match status" value="1"/>
</dbReference>
<dbReference type="Gene3D" id="3.20.20.70">
    <property type="entry name" value="Aldolase class I"/>
    <property type="match status" value="1"/>
</dbReference>
<dbReference type="HAMAP" id="MF_00135">
    <property type="entry name" value="PRAI"/>
    <property type="match status" value="1"/>
</dbReference>
<dbReference type="InterPro" id="IPR013785">
    <property type="entry name" value="Aldolase_TIM"/>
</dbReference>
<dbReference type="InterPro" id="IPR001240">
    <property type="entry name" value="PRAI_dom"/>
</dbReference>
<dbReference type="InterPro" id="IPR011060">
    <property type="entry name" value="RibuloseP-bd_barrel"/>
</dbReference>
<dbReference type="InterPro" id="IPR044643">
    <property type="entry name" value="TrpF_fam"/>
</dbReference>
<dbReference type="NCBIfam" id="NF002298">
    <property type="entry name" value="PRK01222.1-4"/>
    <property type="match status" value="1"/>
</dbReference>
<dbReference type="PANTHER" id="PTHR42894">
    <property type="entry name" value="N-(5'-PHOSPHORIBOSYL)ANTHRANILATE ISOMERASE"/>
    <property type="match status" value="1"/>
</dbReference>
<dbReference type="PANTHER" id="PTHR42894:SF1">
    <property type="entry name" value="N-(5'-PHOSPHORIBOSYL)ANTHRANILATE ISOMERASE"/>
    <property type="match status" value="1"/>
</dbReference>
<dbReference type="Pfam" id="PF00697">
    <property type="entry name" value="PRAI"/>
    <property type="match status" value="1"/>
</dbReference>
<dbReference type="SUPFAM" id="SSF51366">
    <property type="entry name" value="Ribulose-phoshate binding barrel"/>
    <property type="match status" value="1"/>
</dbReference>
<protein>
    <recommendedName>
        <fullName evidence="1">N-(5'-phosphoribosyl)anthranilate isomerase</fullName>
        <shortName evidence="1">PRAI</shortName>
        <ecNumber evidence="1">5.3.1.24</ecNumber>
    </recommendedName>
</protein>
<reference key="1">
    <citation type="journal article" date="2007" name="PLoS Genet.">
        <title>Meningococcal genetic variation mechanisms viewed through comparative analysis of serogroup C strain FAM18.</title>
        <authorList>
            <person name="Bentley S.D."/>
            <person name="Vernikos G.S."/>
            <person name="Snyder L.A.S."/>
            <person name="Churcher C."/>
            <person name="Arrowsmith C."/>
            <person name="Chillingworth T."/>
            <person name="Cronin A."/>
            <person name="Davis P.H."/>
            <person name="Holroyd N.E."/>
            <person name="Jagels K."/>
            <person name="Maddison M."/>
            <person name="Moule S."/>
            <person name="Rabbinowitsch E."/>
            <person name="Sharp S."/>
            <person name="Unwin L."/>
            <person name="Whitehead S."/>
            <person name="Quail M.A."/>
            <person name="Achtman M."/>
            <person name="Barrell B.G."/>
            <person name="Saunders N.J."/>
            <person name="Parkhill J."/>
        </authorList>
    </citation>
    <scope>NUCLEOTIDE SEQUENCE [LARGE SCALE GENOMIC DNA]</scope>
    <source>
        <strain>ATCC 700532 / DSM 15464 / FAM18</strain>
    </source>
</reference>
<organism>
    <name type="scientific">Neisseria meningitidis serogroup C / serotype 2a (strain ATCC 700532 / DSM 15464 / FAM18)</name>
    <dbReference type="NCBI Taxonomy" id="272831"/>
    <lineage>
        <taxon>Bacteria</taxon>
        <taxon>Pseudomonadati</taxon>
        <taxon>Pseudomonadota</taxon>
        <taxon>Betaproteobacteria</taxon>
        <taxon>Neisseriales</taxon>
        <taxon>Neisseriaceae</taxon>
        <taxon>Neisseria</taxon>
    </lineage>
</organism>
<proteinExistence type="inferred from homology"/>
<comment type="catalytic activity">
    <reaction evidence="1">
        <text>N-(5-phospho-beta-D-ribosyl)anthranilate = 1-(2-carboxyphenylamino)-1-deoxy-D-ribulose 5-phosphate</text>
        <dbReference type="Rhea" id="RHEA:21540"/>
        <dbReference type="ChEBI" id="CHEBI:18277"/>
        <dbReference type="ChEBI" id="CHEBI:58613"/>
        <dbReference type="EC" id="5.3.1.24"/>
    </reaction>
</comment>
<comment type="pathway">
    <text evidence="1">Amino-acid biosynthesis; L-tryptophan biosynthesis; L-tryptophan from chorismate: step 3/5.</text>
</comment>
<comment type="similarity">
    <text evidence="1">Belongs to the TrpF family.</text>
</comment>
<sequence length="208" mass="22341">MRKIRTKICGITTPEDASAAVAAGADAVGLVFFQGSSRAVDIARAKKITAALPPFVSVVALFVNESAQNIRRILAEVPIHIIQFHGDEDDTFCRQFDRPYIKAIRVQTASDIRNAADRFPDAQALLFDAYHPSEYGGTGHRFDWTLLAEYSGKPWVLAGGLTPENVGEAVRITGAEAVDVSGGVEASKGKKDPAKVAAFIATANRLSR</sequence>